<comment type="function">
    <text evidence="1">Provides the (R)-glutamate required for cell wall biosynthesis.</text>
</comment>
<comment type="catalytic activity">
    <reaction evidence="1">
        <text>L-glutamate = D-glutamate</text>
        <dbReference type="Rhea" id="RHEA:12813"/>
        <dbReference type="ChEBI" id="CHEBI:29985"/>
        <dbReference type="ChEBI" id="CHEBI:29986"/>
        <dbReference type="EC" id="5.1.1.3"/>
    </reaction>
</comment>
<comment type="pathway">
    <text evidence="1">Cell wall biogenesis; peptidoglycan biosynthesis.</text>
</comment>
<comment type="similarity">
    <text evidence="1">Belongs to the aspartate/glutamate racemases family.</text>
</comment>
<protein>
    <recommendedName>
        <fullName evidence="1">Glutamate racemase</fullName>
        <ecNumber evidence="1">5.1.1.3</ecNumber>
    </recommendedName>
</protein>
<feature type="chain" id="PRO_0000095459" description="Glutamate racemase">
    <location>
        <begin position="1"/>
        <end position="262"/>
    </location>
</feature>
<feature type="active site" description="Proton donor/acceptor" evidence="1">
    <location>
        <position position="69"/>
    </location>
</feature>
<feature type="active site" description="Proton donor/acceptor" evidence="1">
    <location>
        <position position="181"/>
    </location>
</feature>
<feature type="binding site" evidence="1">
    <location>
        <begin position="5"/>
        <end position="6"/>
    </location>
    <ligand>
        <name>substrate</name>
    </ligand>
</feature>
<feature type="binding site" evidence="1">
    <location>
        <begin position="37"/>
        <end position="38"/>
    </location>
    <ligand>
        <name>substrate</name>
    </ligand>
</feature>
<feature type="binding site" evidence="1">
    <location>
        <begin position="70"/>
        <end position="71"/>
    </location>
    <ligand>
        <name>substrate</name>
    </ligand>
</feature>
<feature type="binding site" evidence="1">
    <location>
        <begin position="182"/>
        <end position="183"/>
    </location>
    <ligand>
        <name>substrate</name>
    </ligand>
</feature>
<gene>
    <name evidence="1" type="primary">murI</name>
    <name type="ordered locus">BU554</name>
</gene>
<proteinExistence type="inferred from homology"/>
<name>MURI_BUCAI</name>
<organism>
    <name type="scientific">Buchnera aphidicola subsp. Acyrthosiphon pisum (strain APS)</name>
    <name type="common">Acyrthosiphon pisum symbiotic bacterium</name>
    <dbReference type="NCBI Taxonomy" id="107806"/>
    <lineage>
        <taxon>Bacteria</taxon>
        <taxon>Pseudomonadati</taxon>
        <taxon>Pseudomonadota</taxon>
        <taxon>Gammaproteobacteria</taxon>
        <taxon>Enterobacterales</taxon>
        <taxon>Erwiniaceae</taxon>
        <taxon>Buchnera</taxon>
    </lineage>
</organism>
<dbReference type="EC" id="5.1.1.3" evidence="1"/>
<dbReference type="EMBL" id="BA000003">
    <property type="protein sequence ID" value="BAB13246.1"/>
    <property type="molecule type" value="Genomic_DNA"/>
</dbReference>
<dbReference type="RefSeq" id="NP_240360.1">
    <property type="nucleotide sequence ID" value="NC_002528.1"/>
</dbReference>
<dbReference type="RefSeq" id="WP_010896161.1">
    <property type="nucleotide sequence ID" value="NC_002528.1"/>
</dbReference>
<dbReference type="SMR" id="P57619"/>
<dbReference type="STRING" id="563178.BUAP5A_547"/>
<dbReference type="EnsemblBacteria" id="BAB13246">
    <property type="protein sequence ID" value="BAB13246"/>
    <property type="gene ID" value="BAB13246"/>
</dbReference>
<dbReference type="KEGG" id="buc:BU554"/>
<dbReference type="PATRIC" id="fig|107806.10.peg.558"/>
<dbReference type="eggNOG" id="COG0796">
    <property type="taxonomic scope" value="Bacteria"/>
</dbReference>
<dbReference type="HOGENOM" id="CLU_052344_2_2_6"/>
<dbReference type="UniPathway" id="UPA00219"/>
<dbReference type="Proteomes" id="UP000001806">
    <property type="component" value="Chromosome"/>
</dbReference>
<dbReference type="GO" id="GO:0008881">
    <property type="term" value="F:glutamate racemase activity"/>
    <property type="evidence" value="ECO:0007669"/>
    <property type="project" value="UniProtKB-UniRule"/>
</dbReference>
<dbReference type="GO" id="GO:0071555">
    <property type="term" value="P:cell wall organization"/>
    <property type="evidence" value="ECO:0007669"/>
    <property type="project" value="UniProtKB-KW"/>
</dbReference>
<dbReference type="GO" id="GO:0009252">
    <property type="term" value="P:peptidoglycan biosynthetic process"/>
    <property type="evidence" value="ECO:0007669"/>
    <property type="project" value="UniProtKB-UniRule"/>
</dbReference>
<dbReference type="GO" id="GO:0008360">
    <property type="term" value="P:regulation of cell shape"/>
    <property type="evidence" value="ECO:0007669"/>
    <property type="project" value="UniProtKB-KW"/>
</dbReference>
<dbReference type="Gene3D" id="3.40.50.1860">
    <property type="match status" value="2"/>
</dbReference>
<dbReference type="HAMAP" id="MF_00258">
    <property type="entry name" value="Glu_racemase"/>
    <property type="match status" value="1"/>
</dbReference>
<dbReference type="InterPro" id="IPR015942">
    <property type="entry name" value="Asp/Glu/hydantoin_racemase"/>
</dbReference>
<dbReference type="InterPro" id="IPR001920">
    <property type="entry name" value="Asp/Glu_race"/>
</dbReference>
<dbReference type="InterPro" id="IPR033134">
    <property type="entry name" value="Asp/Glu_racemase_AS_2"/>
</dbReference>
<dbReference type="InterPro" id="IPR004391">
    <property type="entry name" value="Glu_race"/>
</dbReference>
<dbReference type="NCBIfam" id="TIGR00067">
    <property type="entry name" value="glut_race"/>
    <property type="match status" value="1"/>
</dbReference>
<dbReference type="PANTHER" id="PTHR21198">
    <property type="entry name" value="GLUTAMATE RACEMASE"/>
    <property type="match status" value="1"/>
</dbReference>
<dbReference type="PANTHER" id="PTHR21198:SF2">
    <property type="entry name" value="GLUTAMATE RACEMASE"/>
    <property type="match status" value="1"/>
</dbReference>
<dbReference type="Pfam" id="PF01177">
    <property type="entry name" value="Asp_Glu_race"/>
    <property type="match status" value="1"/>
</dbReference>
<dbReference type="SUPFAM" id="SSF53681">
    <property type="entry name" value="Aspartate/glutamate racemase"/>
    <property type="match status" value="2"/>
</dbReference>
<dbReference type="PROSITE" id="PS00924">
    <property type="entry name" value="ASP_GLU_RACEMASE_2"/>
    <property type="match status" value="1"/>
</dbReference>
<keyword id="KW-0133">Cell shape</keyword>
<keyword id="KW-0961">Cell wall biogenesis/degradation</keyword>
<keyword id="KW-0413">Isomerase</keyword>
<keyword id="KW-0573">Peptidoglycan synthesis</keyword>
<keyword id="KW-1185">Reference proteome</keyword>
<sequence length="262" mass="30107">MLIFDSGVGGLSILKNIKKILPNIHYIYMLDNESFPYGNKTEFFIIQRSIKIIHTIKKIYPINVVVIACNTISTVALSILRKKFDIPIFGIFPHIKAAEKITKNKIIGLIATKATINSSYTQKIIYEYSCSNTIKIIGTNKLAVIAEKKIRGVAVSQKKLKNIFRPWINLPTCPDTIILGCTHFSLLEKEIKNILYKTRSVYFIDSIKKVIFQIESYLKTSNVNQKIKKNIFLYSKNNNNLKKLLSFLKQYKFTVIKHINLN</sequence>
<evidence type="ECO:0000255" key="1">
    <source>
        <dbReference type="HAMAP-Rule" id="MF_00258"/>
    </source>
</evidence>
<reference key="1">
    <citation type="journal article" date="2000" name="Nature">
        <title>Genome sequence of the endocellular bacterial symbiont of aphids Buchnera sp. APS.</title>
        <authorList>
            <person name="Shigenobu S."/>
            <person name="Watanabe H."/>
            <person name="Hattori M."/>
            <person name="Sakaki Y."/>
            <person name="Ishikawa H."/>
        </authorList>
    </citation>
    <scope>NUCLEOTIDE SEQUENCE [LARGE SCALE GENOMIC DNA]</scope>
    <source>
        <strain>APS</strain>
    </source>
</reference>
<accession>P57619</accession>